<keyword id="KW-0597">Phosphoprotein</keyword>
<keyword id="KW-0647">Proteasome</keyword>
<keyword id="KW-1185">Reference proteome</keyword>
<sequence length="79" mass="9385">MSAPDKEKEKEKEETNNKSEDLGLLEEDDEFEEFPAEDFRVGDDEEELNVWEDNWDDDNVEDDFSQQLKAHLESKKMET</sequence>
<protein>
    <recommendedName>
        <fullName>Probable 26S proteasome complex subunit sem1</fullName>
    </recommendedName>
</protein>
<gene>
    <name evidence="5" type="primary">Sem1</name>
    <name evidence="5" type="ORF">CG13779</name>
</gene>
<evidence type="ECO:0000250" key="1"/>
<evidence type="ECO:0000256" key="2">
    <source>
        <dbReference type="SAM" id="MobiDB-lite"/>
    </source>
</evidence>
<evidence type="ECO:0000269" key="3">
    <source>
    </source>
</evidence>
<evidence type="ECO:0000305" key="4"/>
<evidence type="ECO:0000312" key="5">
    <source>
        <dbReference type="FlyBase" id="FBgn0266666"/>
    </source>
</evidence>
<reference key="1">
    <citation type="journal article" date="2000" name="Science">
        <title>The genome sequence of Drosophila melanogaster.</title>
        <authorList>
            <person name="Adams M.D."/>
            <person name="Celniker S.E."/>
            <person name="Holt R.A."/>
            <person name="Evans C.A."/>
            <person name="Gocayne J.D."/>
            <person name="Amanatides P.G."/>
            <person name="Scherer S.E."/>
            <person name="Li P.W."/>
            <person name="Hoskins R.A."/>
            <person name="Galle R.F."/>
            <person name="George R.A."/>
            <person name="Lewis S.E."/>
            <person name="Richards S."/>
            <person name="Ashburner M."/>
            <person name="Henderson S.N."/>
            <person name="Sutton G.G."/>
            <person name="Wortman J.R."/>
            <person name="Yandell M.D."/>
            <person name="Zhang Q."/>
            <person name="Chen L.X."/>
            <person name="Brandon R.C."/>
            <person name="Rogers Y.-H.C."/>
            <person name="Blazej R.G."/>
            <person name="Champe M."/>
            <person name="Pfeiffer B.D."/>
            <person name="Wan K.H."/>
            <person name="Doyle C."/>
            <person name="Baxter E.G."/>
            <person name="Helt G."/>
            <person name="Nelson C.R."/>
            <person name="Miklos G.L.G."/>
            <person name="Abril J.F."/>
            <person name="Agbayani A."/>
            <person name="An H.-J."/>
            <person name="Andrews-Pfannkoch C."/>
            <person name="Baldwin D."/>
            <person name="Ballew R.M."/>
            <person name="Basu A."/>
            <person name="Baxendale J."/>
            <person name="Bayraktaroglu L."/>
            <person name="Beasley E.M."/>
            <person name="Beeson K.Y."/>
            <person name="Benos P.V."/>
            <person name="Berman B.P."/>
            <person name="Bhandari D."/>
            <person name="Bolshakov S."/>
            <person name="Borkova D."/>
            <person name="Botchan M.R."/>
            <person name="Bouck J."/>
            <person name="Brokstein P."/>
            <person name="Brottier P."/>
            <person name="Burtis K.C."/>
            <person name="Busam D.A."/>
            <person name="Butler H."/>
            <person name="Cadieu E."/>
            <person name="Center A."/>
            <person name="Chandra I."/>
            <person name="Cherry J.M."/>
            <person name="Cawley S."/>
            <person name="Dahlke C."/>
            <person name="Davenport L.B."/>
            <person name="Davies P."/>
            <person name="de Pablos B."/>
            <person name="Delcher A."/>
            <person name="Deng Z."/>
            <person name="Mays A.D."/>
            <person name="Dew I."/>
            <person name="Dietz S.M."/>
            <person name="Dodson K."/>
            <person name="Doup L.E."/>
            <person name="Downes M."/>
            <person name="Dugan-Rocha S."/>
            <person name="Dunkov B.C."/>
            <person name="Dunn P."/>
            <person name="Durbin K.J."/>
            <person name="Evangelista C.C."/>
            <person name="Ferraz C."/>
            <person name="Ferriera S."/>
            <person name="Fleischmann W."/>
            <person name="Fosler C."/>
            <person name="Gabrielian A.E."/>
            <person name="Garg N.S."/>
            <person name="Gelbart W.M."/>
            <person name="Glasser K."/>
            <person name="Glodek A."/>
            <person name="Gong F."/>
            <person name="Gorrell J.H."/>
            <person name="Gu Z."/>
            <person name="Guan P."/>
            <person name="Harris M."/>
            <person name="Harris N.L."/>
            <person name="Harvey D.A."/>
            <person name="Heiman T.J."/>
            <person name="Hernandez J.R."/>
            <person name="Houck J."/>
            <person name="Hostin D."/>
            <person name="Houston K.A."/>
            <person name="Howland T.J."/>
            <person name="Wei M.-H."/>
            <person name="Ibegwam C."/>
            <person name="Jalali M."/>
            <person name="Kalush F."/>
            <person name="Karpen G.H."/>
            <person name="Ke Z."/>
            <person name="Kennison J.A."/>
            <person name="Ketchum K.A."/>
            <person name="Kimmel B.E."/>
            <person name="Kodira C.D."/>
            <person name="Kraft C.L."/>
            <person name="Kravitz S."/>
            <person name="Kulp D."/>
            <person name="Lai Z."/>
            <person name="Lasko P."/>
            <person name="Lei Y."/>
            <person name="Levitsky A.A."/>
            <person name="Li J.H."/>
            <person name="Li Z."/>
            <person name="Liang Y."/>
            <person name="Lin X."/>
            <person name="Liu X."/>
            <person name="Mattei B."/>
            <person name="McIntosh T.C."/>
            <person name="McLeod M.P."/>
            <person name="McPherson D."/>
            <person name="Merkulov G."/>
            <person name="Milshina N.V."/>
            <person name="Mobarry C."/>
            <person name="Morris J."/>
            <person name="Moshrefi A."/>
            <person name="Mount S.M."/>
            <person name="Moy M."/>
            <person name="Murphy B."/>
            <person name="Murphy L."/>
            <person name="Muzny D.M."/>
            <person name="Nelson D.L."/>
            <person name="Nelson D.R."/>
            <person name="Nelson K.A."/>
            <person name="Nixon K."/>
            <person name="Nusskern D.R."/>
            <person name="Pacleb J.M."/>
            <person name="Palazzolo M."/>
            <person name="Pittman G.S."/>
            <person name="Pan S."/>
            <person name="Pollard J."/>
            <person name="Puri V."/>
            <person name="Reese M.G."/>
            <person name="Reinert K."/>
            <person name="Remington K."/>
            <person name="Saunders R.D.C."/>
            <person name="Scheeler F."/>
            <person name="Shen H."/>
            <person name="Shue B.C."/>
            <person name="Siden-Kiamos I."/>
            <person name="Simpson M."/>
            <person name="Skupski M.P."/>
            <person name="Smith T.J."/>
            <person name="Spier E."/>
            <person name="Spradling A.C."/>
            <person name="Stapleton M."/>
            <person name="Strong R."/>
            <person name="Sun E."/>
            <person name="Svirskas R."/>
            <person name="Tector C."/>
            <person name="Turner R."/>
            <person name="Venter E."/>
            <person name="Wang A.H."/>
            <person name="Wang X."/>
            <person name="Wang Z.-Y."/>
            <person name="Wassarman D.A."/>
            <person name="Weinstock G.M."/>
            <person name="Weissenbach J."/>
            <person name="Williams S.M."/>
            <person name="Woodage T."/>
            <person name="Worley K.C."/>
            <person name="Wu D."/>
            <person name="Yang S."/>
            <person name="Yao Q.A."/>
            <person name="Ye J."/>
            <person name="Yeh R.-F."/>
            <person name="Zaveri J.S."/>
            <person name="Zhan M."/>
            <person name="Zhang G."/>
            <person name="Zhao Q."/>
            <person name="Zheng L."/>
            <person name="Zheng X.H."/>
            <person name="Zhong F.N."/>
            <person name="Zhong W."/>
            <person name="Zhou X."/>
            <person name="Zhu S.C."/>
            <person name="Zhu X."/>
            <person name="Smith H.O."/>
            <person name="Gibbs R.A."/>
            <person name="Myers E.W."/>
            <person name="Rubin G.M."/>
            <person name="Venter J.C."/>
        </authorList>
    </citation>
    <scope>NUCLEOTIDE SEQUENCE [LARGE SCALE GENOMIC DNA]</scope>
    <source>
        <strain>Berkeley</strain>
    </source>
</reference>
<reference key="2">
    <citation type="journal article" date="2002" name="Genome Biol.">
        <title>Annotation of the Drosophila melanogaster euchromatic genome: a systematic review.</title>
        <authorList>
            <person name="Misra S."/>
            <person name="Crosby M.A."/>
            <person name="Mungall C.J."/>
            <person name="Matthews B.B."/>
            <person name="Campbell K.S."/>
            <person name="Hradecky P."/>
            <person name="Huang Y."/>
            <person name="Kaminker J.S."/>
            <person name="Millburn G.H."/>
            <person name="Prochnik S.E."/>
            <person name="Smith C.D."/>
            <person name="Tupy J.L."/>
            <person name="Whitfield E.J."/>
            <person name="Bayraktaroglu L."/>
            <person name="Berman B.P."/>
            <person name="Bettencourt B.R."/>
            <person name="Celniker S.E."/>
            <person name="de Grey A.D.N.J."/>
            <person name="Drysdale R.A."/>
            <person name="Harris N.L."/>
            <person name="Richter J."/>
            <person name="Russo S."/>
            <person name="Schroeder A.J."/>
            <person name="Shu S.Q."/>
            <person name="Stapleton M."/>
            <person name="Yamada C."/>
            <person name="Ashburner M."/>
            <person name="Gelbart W.M."/>
            <person name="Rubin G.M."/>
            <person name="Lewis S.E."/>
        </authorList>
    </citation>
    <scope>GENOME REANNOTATION</scope>
    <source>
        <strain>Berkeley</strain>
    </source>
</reference>
<reference key="3">
    <citation type="journal article" date="2002" name="Genome Biol.">
        <title>A Drosophila full-length cDNA resource.</title>
        <authorList>
            <person name="Stapleton M."/>
            <person name="Carlson J.W."/>
            <person name="Brokstein P."/>
            <person name="Yu C."/>
            <person name="Champe M."/>
            <person name="George R.A."/>
            <person name="Guarin H."/>
            <person name="Kronmiller B."/>
            <person name="Pacleb J.M."/>
            <person name="Park S."/>
            <person name="Wan K.H."/>
            <person name="Rubin G.M."/>
            <person name="Celniker S.E."/>
        </authorList>
    </citation>
    <scope>NUCLEOTIDE SEQUENCE [LARGE SCALE MRNA]</scope>
    <source>
        <strain>Berkeley</strain>
        <tissue>Head</tissue>
    </source>
</reference>
<reference key="4">
    <citation type="journal article" date="2008" name="J. Proteome Res.">
        <title>Phosphoproteome analysis of Drosophila melanogaster embryos.</title>
        <authorList>
            <person name="Zhai B."/>
            <person name="Villen J."/>
            <person name="Beausoleil S.A."/>
            <person name="Mintseris J."/>
            <person name="Gygi S.P."/>
        </authorList>
    </citation>
    <scope>PHOSPHORYLATION [LARGE SCALE ANALYSIS] AT SER-19</scope>
    <scope>IDENTIFICATION BY MASS SPECTROMETRY</scope>
    <source>
        <tissue>Embryo</tissue>
    </source>
</reference>
<dbReference type="EMBL" id="AE014134">
    <property type="protein sequence ID" value="AAF52481.1"/>
    <property type="molecule type" value="Genomic_DNA"/>
</dbReference>
<dbReference type="EMBL" id="AY070697">
    <property type="protein sequence ID" value="AAL48168.1"/>
    <property type="molecule type" value="mRNA"/>
</dbReference>
<dbReference type="RefSeq" id="NP_652555.1">
    <property type="nucleotide sequence ID" value="NM_144298.4"/>
</dbReference>
<dbReference type="BioGRID" id="72687">
    <property type="interactions" value="4"/>
</dbReference>
<dbReference type="ComplexPortal" id="CPX-2263">
    <property type="entry name" value="TREX-2 transcription-export complex"/>
</dbReference>
<dbReference type="FunCoup" id="Q9VM46">
    <property type="interactions" value="115"/>
</dbReference>
<dbReference type="IntAct" id="Q9VM46">
    <property type="interactions" value="2"/>
</dbReference>
<dbReference type="STRING" id="7227.FBpp0079031"/>
<dbReference type="iPTMnet" id="Q9VM46"/>
<dbReference type="PaxDb" id="7227-FBpp0079031"/>
<dbReference type="DNASU" id="50428"/>
<dbReference type="EnsemblMetazoa" id="FBtr0079403">
    <property type="protein sequence ID" value="FBpp0079031"/>
    <property type="gene ID" value="FBgn0266666"/>
</dbReference>
<dbReference type="GeneID" id="50428"/>
<dbReference type="KEGG" id="dme:Dmel_CG13779"/>
<dbReference type="UCSC" id="CG13779-RA">
    <property type="organism name" value="d. melanogaster"/>
</dbReference>
<dbReference type="AGR" id="FB:FBgn0266666"/>
<dbReference type="CTD" id="7979"/>
<dbReference type="FlyBase" id="FBgn0266666">
    <property type="gene designation" value="Sem1"/>
</dbReference>
<dbReference type="VEuPathDB" id="VectorBase:FBgn0266666"/>
<dbReference type="eggNOG" id="KOG4764">
    <property type="taxonomic scope" value="Eukaryota"/>
</dbReference>
<dbReference type="HOGENOM" id="CLU_141774_1_0_1"/>
<dbReference type="InParanoid" id="Q9VM46"/>
<dbReference type="OMA" id="TLWENNW"/>
<dbReference type="Reactome" id="R-DME-209360">
    <property type="pathway name" value="Ubiquitination and proteolysis of phosphorylated CI"/>
</dbReference>
<dbReference type="Reactome" id="R-DME-209406">
    <property type="pathway name" value="Degradation of NF-kappa-B inhibitor, CACT"/>
</dbReference>
<dbReference type="Reactome" id="R-DME-209461">
    <property type="pathway name" value="Ubiquitination and degradation of phosphorylated ARM"/>
</dbReference>
<dbReference type="Reactome" id="R-DME-216167">
    <property type="pathway name" value="Nuclear CI is degraded"/>
</dbReference>
<dbReference type="Reactome" id="R-DME-432395">
    <property type="pathway name" value="Degradation of TIM"/>
</dbReference>
<dbReference type="Reactome" id="R-DME-432524">
    <property type="pathway name" value="Degradation of PER"/>
</dbReference>
<dbReference type="Reactome" id="R-DME-432626">
    <property type="pathway name" value="Circadian Clock pathway"/>
</dbReference>
<dbReference type="Reactome" id="R-DME-538864">
    <property type="pathway name" value="Degradation of CRY"/>
</dbReference>
<dbReference type="BioGRID-ORCS" id="50428">
    <property type="hits" value="1 hit in 1 CRISPR screen"/>
</dbReference>
<dbReference type="GenomeRNAi" id="50428"/>
<dbReference type="PRO" id="PR:Q9VM46"/>
<dbReference type="Proteomes" id="UP000000803">
    <property type="component" value="Chromosome 2L"/>
</dbReference>
<dbReference type="Bgee" id="FBgn0266666">
    <property type="expression patterns" value="Expressed in adult class III enteroendocrine cell in adult midgut (Drosophila) and 186 other cell types or tissues"/>
</dbReference>
<dbReference type="GO" id="GO:0005829">
    <property type="term" value="C:cytosol"/>
    <property type="evidence" value="ECO:0000304"/>
    <property type="project" value="Reactome"/>
</dbReference>
<dbReference type="GO" id="GO:0005654">
    <property type="term" value="C:nucleoplasm"/>
    <property type="evidence" value="ECO:0000304"/>
    <property type="project" value="Reactome"/>
</dbReference>
<dbReference type="GO" id="GO:0000502">
    <property type="term" value="C:proteasome complex"/>
    <property type="evidence" value="ECO:0000250"/>
    <property type="project" value="UniProtKB"/>
</dbReference>
<dbReference type="GO" id="GO:0008541">
    <property type="term" value="C:proteasome regulatory particle, lid subcomplex"/>
    <property type="evidence" value="ECO:0007669"/>
    <property type="project" value="InterPro"/>
</dbReference>
<dbReference type="GO" id="GO:0000724">
    <property type="term" value="P:double-strand break repair via homologous recombination"/>
    <property type="evidence" value="ECO:0000318"/>
    <property type="project" value="GO_Central"/>
</dbReference>
<dbReference type="GO" id="GO:0006406">
    <property type="term" value="P:mRNA export from nucleus"/>
    <property type="evidence" value="ECO:0007669"/>
    <property type="project" value="InterPro"/>
</dbReference>
<dbReference type="GO" id="GO:0043248">
    <property type="term" value="P:proteasome assembly"/>
    <property type="evidence" value="ECO:0007669"/>
    <property type="project" value="InterPro"/>
</dbReference>
<dbReference type="GO" id="GO:0043161">
    <property type="term" value="P:proteasome-mediated ubiquitin-dependent protein catabolic process"/>
    <property type="evidence" value="ECO:0000250"/>
    <property type="project" value="FlyBase"/>
</dbReference>
<dbReference type="InterPro" id="IPR007834">
    <property type="entry name" value="DSS1_SEM1"/>
</dbReference>
<dbReference type="PANTHER" id="PTHR16771">
    <property type="entry name" value="26 PROTEASOME COMPLEX SUBUNIT DSS1"/>
    <property type="match status" value="1"/>
</dbReference>
<dbReference type="PANTHER" id="PTHR16771:SF0">
    <property type="entry name" value="26S PROTEASOME COMPLEX SUBUNIT SEM1"/>
    <property type="match status" value="1"/>
</dbReference>
<dbReference type="Pfam" id="PF05160">
    <property type="entry name" value="DSS1_SEM1"/>
    <property type="match status" value="1"/>
</dbReference>
<dbReference type="SMART" id="SM01385">
    <property type="entry name" value="DSS1_SEM1"/>
    <property type="match status" value="1"/>
</dbReference>
<comment type="function">
    <text evidence="1">Subunit of the 26S proteasome which plays a role in ubiquitin-dependent proteolysis.</text>
</comment>
<comment type="subunit">
    <text evidence="1">Part of the 26S proteasome.</text>
</comment>
<comment type="interaction">
    <interactant intactId="EBI-101834">
        <id>Q9VM46</id>
    </interactant>
    <interactant intactId="EBI-123918">
        <id>Q9VTL1</id>
        <label>PCID2</label>
    </interactant>
    <organismsDiffer>false</organismsDiffer>
    <experiments>3</experiments>
</comment>
<comment type="similarity">
    <text evidence="4">Belongs to the DSS1/SEM1 family.</text>
</comment>
<name>SEM1_DROME</name>
<proteinExistence type="evidence at protein level"/>
<organism>
    <name type="scientific">Drosophila melanogaster</name>
    <name type="common">Fruit fly</name>
    <dbReference type="NCBI Taxonomy" id="7227"/>
    <lineage>
        <taxon>Eukaryota</taxon>
        <taxon>Metazoa</taxon>
        <taxon>Ecdysozoa</taxon>
        <taxon>Arthropoda</taxon>
        <taxon>Hexapoda</taxon>
        <taxon>Insecta</taxon>
        <taxon>Pterygota</taxon>
        <taxon>Neoptera</taxon>
        <taxon>Endopterygota</taxon>
        <taxon>Diptera</taxon>
        <taxon>Brachycera</taxon>
        <taxon>Muscomorpha</taxon>
        <taxon>Ephydroidea</taxon>
        <taxon>Drosophilidae</taxon>
        <taxon>Drosophila</taxon>
        <taxon>Sophophora</taxon>
    </lineage>
</organism>
<accession>Q9VM46</accession>
<feature type="chain" id="PRO_0000122964" description="Probable 26S proteasome complex subunit sem1">
    <location>
        <begin position="1"/>
        <end position="79"/>
    </location>
</feature>
<feature type="region of interest" description="Disordered" evidence="2">
    <location>
        <begin position="1"/>
        <end position="30"/>
    </location>
</feature>
<feature type="compositionally biased region" description="Basic and acidic residues" evidence="2">
    <location>
        <begin position="1"/>
        <end position="21"/>
    </location>
</feature>
<feature type="modified residue" description="Phosphoserine" evidence="3">
    <location>
        <position position="19"/>
    </location>
</feature>